<dbReference type="EMBL" id="AE016877">
    <property type="protein sequence ID" value="AAP11389.1"/>
    <property type="molecule type" value="Genomic_DNA"/>
</dbReference>
<dbReference type="RefSeq" id="NP_834188.1">
    <property type="nucleotide sequence ID" value="NC_004722.1"/>
</dbReference>
<dbReference type="SMR" id="Q817Q5"/>
<dbReference type="STRING" id="226900.BC_4476"/>
<dbReference type="KEGG" id="bce:BC4476"/>
<dbReference type="PATRIC" id="fig|226900.8.peg.4629"/>
<dbReference type="HOGENOM" id="CLU_033732_3_0_9"/>
<dbReference type="OrthoDB" id="9804921at2"/>
<dbReference type="Proteomes" id="UP000001417">
    <property type="component" value="Chromosome"/>
</dbReference>
<dbReference type="GO" id="GO:0005829">
    <property type="term" value="C:cytosol"/>
    <property type="evidence" value="ECO:0000318"/>
    <property type="project" value="GO_Central"/>
</dbReference>
<dbReference type="GO" id="GO:0005525">
    <property type="term" value="F:GTP binding"/>
    <property type="evidence" value="ECO:0007669"/>
    <property type="project" value="UniProtKB-UniRule"/>
</dbReference>
<dbReference type="GO" id="GO:0046872">
    <property type="term" value="F:metal ion binding"/>
    <property type="evidence" value="ECO:0007669"/>
    <property type="project" value="UniProtKB-KW"/>
</dbReference>
<dbReference type="GO" id="GO:0000917">
    <property type="term" value="P:division septum assembly"/>
    <property type="evidence" value="ECO:0007669"/>
    <property type="project" value="UniProtKB-KW"/>
</dbReference>
<dbReference type="CDD" id="cd01876">
    <property type="entry name" value="YihA_EngB"/>
    <property type="match status" value="1"/>
</dbReference>
<dbReference type="FunFam" id="3.40.50.300:FF:000098">
    <property type="entry name" value="Probable GTP-binding protein EngB"/>
    <property type="match status" value="1"/>
</dbReference>
<dbReference type="Gene3D" id="3.40.50.300">
    <property type="entry name" value="P-loop containing nucleotide triphosphate hydrolases"/>
    <property type="match status" value="1"/>
</dbReference>
<dbReference type="HAMAP" id="MF_00321">
    <property type="entry name" value="GTPase_EngB"/>
    <property type="match status" value="1"/>
</dbReference>
<dbReference type="InterPro" id="IPR030393">
    <property type="entry name" value="G_ENGB_dom"/>
</dbReference>
<dbReference type="InterPro" id="IPR006073">
    <property type="entry name" value="GTP-bd"/>
</dbReference>
<dbReference type="InterPro" id="IPR019987">
    <property type="entry name" value="GTP-bd_ribosome_bio_YsxC"/>
</dbReference>
<dbReference type="InterPro" id="IPR027417">
    <property type="entry name" value="P-loop_NTPase"/>
</dbReference>
<dbReference type="NCBIfam" id="TIGR03598">
    <property type="entry name" value="GTPase_YsxC"/>
    <property type="match status" value="1"/>
</dbReference>
<dbReference type="PANTHER" id="PTHR11649:SF13">
    <property type="entry name" value="ENGB-TYPE G DOMAIN-CONTAINING PROTEIN"/>
    <property type="match status" value="1"/>
</dbReference>
<dbReference type="PANTHER" id="PTHR11649">
    <property type="entry name" value="MSS1/TRME-RELATED GTP-BINDING PROTEIN"/>
    <property type="match status" value="1"/>
</dbReference>
<dbReference type="Pfam" id="PF01926">
    <property type="entry name" value="MMR_HSR1"/>
    <property type="match status" value="1"/>
</dbReference>
<dbReference type="SUPFAM" id="SSF52540">
    <property type="entry name" value="P-loop containing nucleoside triphosphate hydrolases"/>
    <property type="match status" value="1"/>
</dbReference>
<dbReference type="PROSITE" id="PS51706">
    <property type="entry name" value="G_ENGB"/>
    <property type="match status" value="1"/>
</dbReference>
<name>ENGB_BACCR</name>
<evidence type="ECO:0000255" key="1">
    <source>
        <dbReference type="HAMAP-Rule" id="MF_00321"/>
    </source>
</evidence>
<keyword id="KW-0131">Cell cycle</keyword>
<keyword id="KW-0132">Cell division</keyword>
<keyword id="KW-0342">GTP-binding</keyword>
<keyword id="KW-0460">Magnesium</keyword>
<keyword id="KW-0479">Metal-binding</keyword>
<keyword id="KW-0547">Nucleotide-binding</keyword>
<keyword id="KW-1185">Reference proteome</keyword>
<keyword id="KW-0717">Septation</keyword>
<accession>Q817Q5</accession>
<comment type="function">
    <text evidence="1">Necessary for normal cell division and for the maintenance of normal septation.</text>
</comment>
<comment type="cofactor">
    <cofactor evidence="1">
        <name>Mg(2+)</name>
        <dbReference type="ChEBI" id="CHEBI:18420"/>
    </cofactor>
</comment>
<comment type="similarity">
    <text evidence="1">Belongs to the TRAFAC class TrmE-Era-EngA-EngB-Septin-like GTPase superfamily. EngB GTPase family.</text>
</comment>
<feature type="chain" id="PRO_0000266813" description="Probable GTP-binding protein EngB">
    <location>
        <begin position="1"/>
        <end position="198"/>
    </location>
</feature>
<feature type="domain" description="EngB-type G" evidence="1">
    <location>
        <begin position="22"/>
        <end position="195"/>
    </location>
</feature>
<feature type="binding site" evidence="1">
    <location>
        <begin position="30"/>
        <end position="37"/>
    </location>
    <ligand>
        <name>GTP</name>
        <dbReference type="ChEBI" id="CHEBI:37565"/>
    </ligand>
</feature>
<feature type="binding site" evidence="1">
    <location>
        <position position="37"/>
    </location>
    <ligand>
        <name>Mg(2+)</name>
        <dbReference type="ChEBI" id="CHEBI:18420"/>
    </ligand>
</feature>
<feature type="binding site" evidence="1">
    <location>
        <begin position="57"/>
        <end position="61"/>
    </location>
    <ligand>
        <name>GTP</name>
        <dbReference type="ChEBI" id="CHEBI:37565"/>
    </ligand>
</feature>
<feature type="binding site" evidence="1">
    <location>
        <position position="59"/>
    </location>
    <ligand>
        <name>Mg(2+)</name>
        <dbReference type="ChEBI" id="CHEBI:18420"/>
    </ligand>
</feature>
<feature type="binding site" evidence="1">
    <location>
        <begin position="75"/>
        <end position="78"/>
    </location>
    <ligand>
        <name>GTP</name>
        <dbReference type="ChEBI" id="CHEBI:37565"/>
    </ligand>
</feature>
<feature type="binding site" evidence="1">
    <location>
        <begin position="142"/>
        <end position="145"/>
    </location>
    <ligand>
        <name>GTP</name>
        <dbReference type="ChEBI" id="CHEBI:37565"/>
    </ligand>
</feature>
<feature type="binding site" evidence="1">
    <location>
        <begin position="174"/>
        <end position="176"/>
    </location>
    <ligand>
        <name>GTP</name>
        <dbReference type="ChEBI" id="CHEBI:37565"/>
    </ligand>
</feature>
<reference key="1">
    <citation type="journal article" date="2003" name="Nature">
        <title>Genome sequence of Bacillus cereus and comparative analysis with Bacillus anthracis.</title>
        <authorList>
            <person name="Ivanova N."/>
            <person name="Sorokin A."/>
            <person name="Anderson I."/>
            <person name="Galleron N."/>
            <person name="Candelon B."/>
            <person name="Kapatral V."/>
            <person name="Bhattacharyya A."/>
            <person name="Reznik G."/>
            <person name="Mikhailova N."/>
            <person name="Lapidus A."/>
            <person name="Chu L."/>
            <person name="Mazur M."/>
            <person name="Goltsman E."/>
            <person name="Larsen N."/>
            <person name="D'Souza M."/>
            <person name="Walunas T."/>
            <person name="Grechkin Y."/>
            <person name="Pusch G."/>
            <person name="Haselkorn R."/>
            <person name="Fonstein M."/>
            <person name="Ehrlich S.D."/>
            <person name="Overbeek R."/>
            <person name="Kyrpides N.C."/>
        </authorList>
    </citation>
    <scope>NUCLEOTIDE SEQUENCE [LARGE SCALE GENOMIC DNA]</scope>
    <source>
        <strain>ATCC 14579 / DSM 31 / CCUG 7414 / JCM 2152 / NBRC 15305 / NCIMB 9373 / NCTC 2599 / NRRL B-3711</strain>
    </source>
</reference>
<gene>
    <name evidence="1" type="primary">engB</name>
    <name type="ordered locus">BC_4476</name>
</gene>
<organism>
    <name type="scientific">Bacillus cereus (strain ATCC 14579 / DSM 31 / CCUG 7414 / JCM 2152 / NBRC 15305 / NCIMB 9373 / NCTC 2599 / NRRL B-3711)</name>
    <dbReference type="NCBI Taxonomy" id="226900"/>
    <lineage>
        <taxon>Bacteria</taxon>
        <taxon>Bacillati</taxon>
        <taxon>Bacillota</taxon>
        <taxon>Bacilli</taxon>
        <taxon>Bacillales</taxon>
        <taxon>Bacillaceae</taxon>
        <taxon>Bacillus</taxon>
        <taxon>Bacillus cereus group</taxon>
    </lineage>
</organism>
<sequence length="198" mass="22371">MKVTKADIVISAVKPEQYPDSDLPEIALAGRSNVGKSSFINKILNRKKLVRISSKPGKTQTLNFFLINEMMHFVDVPGYGYAKVSKSERAAWGKMIETYFTTREQLDAAVLVVDLRHQPTSDDVMMYDFLKHYEIPTIIIATKADKIPKGKWQKHLKVVKETLAVEIGDEIVLFSSETGLGKEEAWKAIHKFTKTKNA</sequence>
<protein>
    <recommendedName>
        <fullName evidence="1">Probable GTP-binding protein EngB</fullName>
    </recommendedName>
</protein>
<proteinExistence type="inferred from homology"/>